<dbReference type="EMBL" id="AM295007">
    <property type="protein sequence ID" value="CAM29561.1"/>
    <property type="molecule type" value="Genomic_DNA"/>
</dbReference>
<dbReference type="RefSeq" id="WP_002986029.1">
    <property type="nucleotide sequence ID" value="NC_009332.1"/>
</dbReference>
<dbReference type="SMR" id="A2RCI9"/>
<dbReference type="GeneID" id="69900206"/>
<dbReference type="KEGG" id="spf:SpyM50218"/>
<dbReference type="HOGENOM" id="CLU_071496_1_0_9"/>
<dbReference type="GO" id="GO:0030674">
    <property type="term" value="F:protein-macromolecule adaptor activity"/>
    <property type="evidence" value="ECO:0007669"/>
    <property type="project" value="UniProtKB-UniRule"/>
</dbReference>
<dbReference type="Gene3D" id="3.30.70.1950">
    <property type="match status" value="1"/>
</dbReference>
<dbReference type="HAMAP" id="MF_01124">
    <property type="entry name" value="MecA"/>
    <property type="match status" value="1"/>
</dbReference>
<dbReference type="InterPro" id="IPR038471">
    <property type="entry name" value="MecA_C_sf"/>
</dbReference>
<dbReference type="InterPro" id="IPR008681">
    <property type="entry name" value="Neg-reg_MecA"/>
</dbReference>
<dbReference type="NCBIfam" id="NF002643">
    <property type="entry name" value="PRK02315.1-4"/>
    <property type="match status" value="1"/>
</dbReference>
<dbReference type="PANTHER" id="PTHR39161">
    <property type="entry name" value="ADAPTER PROTEIN MECA"/>
    <property type="match status" value="1"/>
</dbReference>
<dbReference type="PANTHER" id="PTHR39161:SF1">
    <property type="entry name" value="ADAPTER PROTEIN MECA 1"/>
    <property type="match status" value="1"/>
</dbReference>
<dbReference type="Pfam" id="PF05389">
    <property type="entry name" value="MecA"/>
    <property type="match status" value="1"/>
</dbReference>
<dbReference type="PIRSF" id="PIRSF029008">
    <property type="entry name" value="MecA"/>
    <property type="match status" value="1"/>
</dbReference>
<reference key="1">
    <citation type="journal article" date="2007" name="J. Bacteriol.">
        <title>Complete genome of acute rheumatic fever-associated serotype M5 Streptococcus pyogenes strain Manfredo.</title>
        <authorList>
            <person name="Holden M.T.G."/>
            <person name="Scott A."/>
            <person name="Cherevach I."/>
            <person name="Chillingworth T."/>
            <person name="Churcher C."/>
            <person name="Cronin A."/>
            <person name="Dowd L."/>
            <person name="Feltwell T."/>
            <person name="Hamlin N."/>
            <person name="Holroyd S."/>
            <person name="Jagels K."/>
            <person name="Moule S."/>
            <person name="Mungall K."/>
            <person name="Quail M.A."/>
            <person name="Price C."/>
            <person name="Rabbinowitsch E."/>
            <person name="Sharp S."/>
            <person name="Skelton J."/>
            <person name="Whitehead S."/>
            <person name="Barrell B.G."/>
            <person name="Kehoe M."/>
            <person name="Parkhill J."/>
        </authorList>
    </citation>
    <scope>NUCLEOTIDE SEQUENCE [LARGE SCALE GENOMIC DNA]</scope>
    <source>
        <strain>Manfredo</strain>
    </source>
</reference>
<organism>
    <name type="scientific">Streptococcus pyogenes serotype M5 (strain Manfredo)</name>
    <dbReference type="NCBI Taxonomy" id="160491"/>
    <lineage>
        <taxon>Bacteria</taxon>
        <taxon>Bacillati</taxon>
        <taxon>Bacillota</taxon>
        <taxon>Bacilli</taxon>
        <taxon>Lactobacillales</taxon>
        <taxon>Streptococcaceae</taxon>
        <taxon>Streptococcus</taxon>
    </lineage>
</organism>
<evidence type="ECO:0000255" key="1">
    <source>
        <dbReference type="HAMAP-Rule" id="MF_01124"/>
    </source>
</evidence>
<name>MECA_STRPG</name>
<proteinExistence type="inferred from homology"/>
<protein>
    <recommendedName>
        <fullName evidence="1">Adapter protein MecA</fullName>
    </recommendedName>
</protein>
<sequence>MEMKQISETTLKITISMDDLEERGMELKDFLIPQEKTEEFFYSVMDELDLPDNFKDSGMLSFRVTPRKDRLDVFVTKSEINKDINLEDLAEFGDMSQMTPEDFFKSLEQSMREKGDVKAHEKLEKIEEIMEDVVEATLANQSEAADPSTNHESEPLDYVHYVLDFSTITEAVAFAKTIDFSIEASELYKGSNCYHMTILLDVQQQPSYFANVMYARLIEHANPGSKTRAYLQEHGLQLMLDGAVEQLQKIELG</sequence>
<gene>
    <name evidence="1" type="primary">mecA</name>
    <name type="ordered locus">SpyM50218</name>
</gene>
<accession>A2RCI9</accession>
<comment type="function">
    <text evidence="1">Enables the recognition and targeting of unfolded and aggregated proteins to the ClpC protease or to other proteins involved in proteolysis.</text>
</comment>
<comment type="subunit">
    <text evidence="1">Homodimer.</text>
</comment>
<comment type="domain">
    <text>The N-terminal domain probably binds unfolded/aggregated proteins; the C-terminal domain interacts with ClpC.</text>
</comment>
<comment type="similarity">
    <text evidence="1">Belongs to the MecA family.</text>
</comment>
<feature type="chain" id="PRO_1000065351" description="Adapter protein MecA">
    <location>
        <begin position="1"/>
        <end position="253"/>
    </location>
</feature>